<feature type="chain" id="PRO_0000334075" description="Cell division protein SepF">
    <location>
        <begin position="1"/>
        <end position="187"/>
    </location>
</feature>
<feature type="region of interest" description="Disordered" evidence="2">
    <location>
        <begin position="21"/>
        <end position="97"/>
    </location>
</feature>
<feature type="compositionally biased region" description="Polar residues" evidence="2">
    <location>
        <begin position="38"/>
        <end position="63"/>
    </location>
</feature>
<feature type="compositionally biased region" description="Polar residues" evidence="2">
    <location>
        <begin position="70"/>
        <end position="97"/>
    </location>
</feature>
<name>SEPF_STAAC</name>
<protein>
    <recommendedName>
        <fullName evidence="1">Cell division protein SepF</fullName>
    </recommendedName>
</protein>
<gene>
    <name evidence="1" type="primary">sepF</name>
    <name type="ordered locus">SACOL1202</name>
</gene>
<proteinExistence type="inferred from homology"/>
<sequence>MSHLALKDLFSGFFVIDDEEEVEVPDKQQQVNEAPAKEQSQQTTKQNAIKSVPQKSASRYTTTSEERNNRMSNYSKNNSRNVVTMNNATPNNASQESSKMCLFEPRVFSDTQDIADELKNRRATLVNLQRIDKVSAKRIIDFLSGTVYAIGGDIQRVGTDIFLCTPDNVEVAGSITDHIENMEHSFD</sequence>
<keyword id="KW-0131">Cell cycle</keyword>
<keyword id="KW-0132">Cell division</keyword>
<keyword id="KW-0963">Cytoplasm</keyword>
<keyword id="KW-0717">Septation</keyword>
<comment type="function">
    <text evidence="1">Cell division protein that is part of the divisome complex and is recruited early to the Z-ring. Probably stimulates Z-ring formation, perhaps through the cross-linking of FtsZ protofilaments. Its function overlaps with FtsA.</text>
</comment>
<comment type="subunit">
    <text evidence="1">Homodimer. Interacts with FtsZ.</text>
</comment>
<comment type="subcellular location">
    <subcellularLocation>
        <location evidence="1">Cytoplasm</location>
    </subcellularLocation>
    <text evidence="1">Localizes to the division site, in a FtsZ-dependent manner.</text>
</comment>
<comment type="similarity">
    <text evidence="1">Belongs to the SepF family.</text>
</comment>
<reference key="1">
    <citation type="journal article" date="2005" name="J. Bacteriol.">
        <title>Insights on evolution of virulence and resistance from the complete genome analysis of an early methicillin-resistant Staphylococcus aureus strain and a biofilm-producing methicillin-resistant Staphylococcus epidermidis strain.</title>
        <authorList>
            <person name="Gill S.R."/>
            <person name="Fouts D.E."/>
            <person name="Archer G.L."/>
            <person name="Mongodin E.F."/>
            <person name="DeBoy R.T."/>
            <person name="Ravel J."/>
            <person name="Paulsen I.T."/>
            <person name="Kolonay J.F."/>
            <person name="Brinkac L.M."/>
            <person name="Beanan M.J."/>
            <person name="Dodson R.J."/>
            <person name="Daugherty S.C."/>
            <person name="Madupu R."/>
            <person name="Angiuoli S.V."/>
            <person name="Durkin A.S."/>
            <person name="Haft D.H."/>
            <person name="Vamathevan J.J."/>
            <person name="Khouri H."/>
            <person name="Utterback T.R."/>
            <person name="Lee C."/>
            <person name="Dimitrov G."/>
            <person name="Jiang L."/>
            <person name="Qin H."/>
            <person name="Weidman J."/>
            <person name="Tran K."/>
            <person name="Kang K.H."/>
            <person name="Hance I.R."/>
            <person name="Nelson K.E."/>
            <person name="Fraser C.M."/>
        </authorList>
    </citation>
    <scope>NUCLEOTIDE SEQUENCE [LARGE SCALE GENOMIC DNA]</scope>
    <source>
        <strain>COL</strain>
    </source>
</reference>
<dbReference type="EMBL" id="CP000046">
    <property type="protein sequence ID" value="AAW38039.1"/>
    <property type="molecule type" value="Genomic_DNA"/>
</dbReference>
<dbReference type="RefSeq" id="WP_000018608.1">
    <property type="nucleotide sequence ID" value="NZ_JBGOFO010000002.1"/>
</dbReference>
<dbReference type="SMR" id="Q5HGP2"/>
<dbReference type="KEGG" id="sac:SACOL1202"/>
<dbReference type="HOGENOM" id="CLU_078499_4_1_9"/>
<dbReference type="Proteomes" id="UP000000530">
    <property type="component" value="Chromosome"/>
</dbReference>
<dbReference type="GO" id="GO:0005737">
    <property type="term" value="C:cytoplasm"/>
    <property type="evidence" value="ECO:0007669"/>
    <property type="project" value="UniProtKB-SubCell"/>
</dbReference>
<dbReference type="GO" id="GO:0000917">
    <property type="term" value="P:division septum assembly"/>
    <property type="evidence" value="ECO:0007669"/>
    <property type="project" value="UniProtKB-KW"/>
</dbReference>
<dbReference type="GO" id="GO:0043093">
    <property type="term" value="P:FtsZ-dependent cytokinesis"/>
    <property type="evidence" value="ECO:0007669"/>
    <property type="project" value="UniProtKB-UniRule"/>
</dbReference>
<dbReference type="Gene3D" id="3.30.110.150">
    <property type="entry name" value="SepF-like protein"/>
    <property type="match status" value="1"/>
</dbReference>
<dbReference type="HAMAP" id="MF_01197">
    <property type="entry name" value="SepF"/>
    <property type="match status" value="1"/>
</dbReference>
<dbReference type="InterPro" id="IPR023052">
    <property type="entry name" value="Cell_div_SepF"/>
</dbReference>
<dbReference type="InterPro" id="IPR007561">
    <property type="entry name" value="Cell_div_SepF/SepF-rel"/>
</dbReference>
<dbReference type="InterPro" id="IPR038594">
    <property type="entry name" value="SepF-like_sf"/>
</dbReference>
<dbReference type="PANTHER" id="PTHR35798">
    <property type="entry name" value="CELL DIVISION PROTEIN SEPF"/>
    <property type="match status" value="1"/>
</dbReference>
<dbReference type="PANTHER" id="PTHR35798:SF1">
    <property type="entry name" value="CELL DIVISION PROTEIN SEPF"/>
    <property type="match status" value="1"/>
</dbReference>
<dbReference type="Pfam" id="PF04472">
    <property type="entry name" value="SepF"/>
    <property type="match status" value="1"/>
</dbReference>
<accession>Q5HGP2</accession>
<evidence type="ECO:0000255" key="1">
    <source>
        <dbReference type="HAMAP-Rule" id="MF_01197"/>
    </source>
</evidence>
<evidence type="ECO:0000256" key="2">
    <source>
        <dbReference type="SAM" id="MobiDB-lite"/>
    </source>
</evidence>
<organism>
    <name type="scientific">Staphylococcus aureus (strain COL)</name>
    <dbReference type="NCBI Taxonomy" id="93062"/>
    <lineage>
        <taxon>Bacteria</taxon>
        <taxon>Bacillati</taxon>
        <taxon>Bacillota</taxon>
        <taxon>Bacilli</taxon>
        <taxon>Bacillales</taxon>
        <taxon>Staphylococcaceae</taxon>
        <taxon>Staphylococcus</taxon>
    </lineage>
</organism>